<protein>
    <recommendedName>
        <fullName evidence="3">Brevinin-2-related peptide</fullName>
    </recommendedName>
</protein>
<keyword id="KW-0027">Amidation</keyword>
<keyword id="KW-0878">Amphibian defense peptide</keyword>
<keyword id="KW-0044">Antibiotic</keyword>
<keyword id="KW-0929">Antimicrobial</keyword>
<keyword id="KW-0930">Antiviral protein</keyword>
<keyword id="KW-0204">Cytolysis</keyword>
<keyword id="KW-0903">Direct protein sequencing</keyword>
<keyword id="KW-0295">Fungicide</keyword>
<keyword id="KW-0354">Hemolysis</keyword>
<keyword id="KW-0964">Secreted</keyword>
<reference key="1">
    <citation type="journal article" date="2004" name="Comp. Biochem. Physiol.">
        <title>Purification and characterization of antimicrobial peptides from the skin secretions of the mink frog (Rana septentrionalis).</title>
        <authorList>
            <person name="Bevier C.R."/>
            <person name="Sonnevend A."/>
            <person name="Kolodziejek J."/>
            <person name="Nowotny N."/>
            <person name="Nielsen P.F."/>
            <person name="Conlon J.M."/>
        </authorList>
    </citation>
    <scope>PROTEIN SEQUENCE</scope>
    <scope>AMIDATION AT LEU-21</scope>
    <scope>SUBCELLULAR LOCATION</scope>
    <scope>MASS SPECTROMETRY</scope>
    <scope>DEVELOPMENTAL STAGE</scope>
    <source>
        <tissue>Skin secretion</tissue>
    </source>
</reference>
<reference key="2">
    <citation type="journal article" date="2010" name="Antimicrob. Agents Chemother.">
        <title>Identification of novel human immunodeficiency virus type 1-inhibitory peptides based on the antimicrobial peptide database.</title>
        <authorList>
            <person name="Wang G."/>
            <person name="Watson K.M."/>
            <person name="Peterkofsky A."/>
            <person name="Buckheit R.W. Jr."/>
        </authorList>
    </citation>
    <scope>FUNCTION</scope>
</reference>
<evidence type="ECO:0000269" key="1">
    <source>
    </source>
</evidence>
<evidence type="ECO:0000269" key="2">
    <source>
    </source>
</evidence>
<evidence type="ECO:0000303" key="3">
    <source>
    </source>
</evidence>
<evidence type="ECO:0000305" key="4"/>
<evidence type="ECO:0000305" key="5">
    <source>
    </source>
</evidence>
<comment type="function">
    <text evidence="1 2">Antimicrobial peptide with activity against Gram-negative and Gram-positive bacteria (MIC=13 uM against E.coli, MIC=25 uM against S.aureus) and fungi (MIC=25 uM against C.albicans) (PubMed:15556063). Also shows hemolytic activity (HC(50)=50 uM) (PubMed:15556063). In vitro, shows moderate inhibitory activity against HIV (PubMed:20086159).</text>
</comment>
<comment type="subcellular location">
    <subcellularLocation>
        <location evidence="1">Secreted</location>
    </subcellularLocation>
</comment>
<comment type="tissue specificity">
    <text evidence="5">Expressed by the skin glands.</text>
</comment>
<comment type="developmental stage">
    <text evidence="5">Is equally expressed in juvenile and adult (male and female) frogs.</text>
</comment>
<comment type="mass spectrometry" mass="2317.2" method="MALDI" evidence="1"/>
<comment type="similarity">
    <text evidence="4">Belongs to the frog skin active peptide (FSAP) family. Brevinin subfamily.</text>
</comment>
<comment type="online information" name="The antimicrobial peptide database">
    <link uri="https://wangapd3.com/database/query_output.php?ID=00599"/>
</comment>
<sequence length="21" mass="2320">GIWDTIKSMGKVFAGKILQNL</sequence>
<organism>
    <name type="scientific">Lithobates septentrionalis</name>
    <name type="common">Mink frog</name>
    <name type="synonym">Rana septentrionalis</name>
    <dbReference type="NCBI Taxonomy" id="190274"/>
    <lineage>
        <taxon>Eukaryota</taxon>
        <taxon>Metazoa</taxon>
        <taxon>Chordata</taxon>
        <taxon>Craniata</taxon>
        <taxon>Vertebrata</taxon>
        <taxon>Euteleostomi</taxon>
        <taxon>Amphibia</taxon>
        <taxon>Batrachia</taxon>
        <taxon>Anura</taxon>
        <taxon>Neobatrachia</taxon>
        <taxon>Ranoidea</taxon>
        <taxon>Ranidae</taxon>
        <taxon>Lithobates</taxon>
    </lineage>
</organism>
<proteinExistence type="evidence at protein level"/>
<feature type="peptide" id="PRO_0000449485" description="Brevinin-2-related peptide" evidence="1">
    <location>
        <begin position="1"/>
        <end position="21"/>
    </location>
</feature>
<feature type="modified residue" description="Leucine amide" evidence="1">
    <location>
        <position position="21"/>
    </location>
</feature>
<accession>P0DQK8</accession>
<dbReference type="GO" id="GO:0005576">
    <property type="term" value="C:extracellular region"/>
    <property type="evidence" value="ECO:0007669"/>
    <property type="project" value="UniProtKB-SubCell"/>
</dbReference>
<dbReference type="GO" id="GO:0042742">
    <property type="term" value="P:defense response to bacterium"/>
    <property type="evidence" value="ECO:0007669"/>
    <property type="project" value="UniProtKB-KW"/>
</dbReference>
<dbReference type="GO" id="GO:0050832">
    <property type="term" value="P:defense response to fungus"/>
    <property type="evidence" value="ECO:0007669"/>
    <property type="project" value="UniProtKB-KW"/>
</dbReference>
<dbReference type="GO" id="GO:0031640">
    <property type="term" value="P:killing of cells of another organism"/>
    <property type="evidence" value="ECO:0007669"/>
    <property type="project" value="UniProtKB-KW"/>
</dbReference>
<dbReference type="GO" id="GO:0050688">
    <property type="term" value="P:regulation of defense response to virus"/>
    <property type="evidence" value="ECO:0007669"/>
    <property type="project" value="UniProtKB-KW"/>
</dbReference>
<name>BR2RP_LITST</name>